<organism>
    <name type="scientific">Trichodesmium erythraeum (strain IMS101)</name>
    <dbReference type="NCBI Taxonomy" id="203124"/>
    <lineage>
        <taxon>Bacteria</taxon>
        <taxon>Bacillati</taxon>
        <taxon>Cyanobacteriota</taxon>
        <taxon>Cyanophyceae</taxon>
        <taxon>Oscillatoriophycideae</taxon>
        <taxon>Oscillatoriales</taxon>
        <taxon>Microcoleaceae</taxon>
        <taxon>Trichodesmium</taxon>
    </lineage>
</organism>
<sequence length="432" mass="46411">MVVTTLNTTKSEEIFAAAQKLMPGGVSSPVRAFKSVGGQPIVFDRVQGAYIWDVDGNQYIDYVGTWGPAICGHAHPEVLNGLKEVLEKGTSFGAPCALENTLAKMVIDAVPSIEMIRFVNSGTEACMAVLRLMRAFTGRDKVIKFEGCYHGHADMFLVKAGSGVATLGLPDSPGVPKHVTKNTLTAPYNDLETVKKLFEENPDQISGVILEPVVGNSGFIVPDAGFLEGLRMITKENGALLVFDEVMTGFRIAYGGAQEKFNVTPDLTTLGKIIGGGLPVGAYGGRQDIMSMVAPAGPMYQAGTLSGNPLAMTAGIKTLELLKKPGTYDQLNKITKRLADGLLNIAKETNNDIWGGHISAMFGIFFNKGPVHNYDDAKKSDLTKFSKFHRGMLEHGIYLAPSQFEAGFTSLAHTEEDIDRTLATAKKVMSSL</sequence>
<name>GSA_TRIEI</name>
<proteinExistence type="inferred from homology"/>
<accession>Q110Z9</accession>
<keyword id="KW-0149">Chlorophyll biosynthesis</keyword>
<keyword id="KW-0963">Cytoplasm</keyword>
<keyword id="KW-0413">Isomerase</keyword>
<keyword id="KW-0627">Porphyrin biosynthesis</keyword>
<keyword id="KW-0663">Pyridoxal phosphate</keyword>
<reference key="1">
    <citation type="journal article" date="2015" name="Proc. Natl. Acad. Sci. U.S.A.">
        <title>Trichodesmium genome maintains abundant, widespread noncoding DNA in situ, despite oligotrophic lifestyle.</title>
        <authorList>
            <person name="Walworth N."/>
            <person name="Pfreundt U."/>
            <person name="Nelson W.C."/>
            <person name="Mincer T."/>
            <person name="Heidelberg J.F."/>
            <person name="Fu F."/>
            <person name="Waterbury J.B."/>
            <person name="Glavina del Rio T."/>
            <person name="Goodwin L."/>
            <person name="Kyrpides N.C."/>
            <person name="Land M.L."/>
            <person name="Woyke T."/>
            <person name="Hutchins D.A."/>
            <person name="Hess W.R."/>
            <person name="Webb E.A."/>
        </authorList>
    </citation>
    <scope>NUCLEOTIDE SEQUENCE [LARGE SCALE GENOMIC DNA]</scope>
    <source>
        <strain>IMS101</strain>
    </source>
</reference>
<comment type="catalytic activity">
    <reaction evidence="1">
        <text>(S)-4-amino-5-oxopentanoate = 5-aminolevulinate</text>
        <dbReference type="Rhea" id="RHEA:14265"/>
        <dbReference type="ChEBI" id="CHEBI:57501"/>
        <dbReference type="ChEBI" id="CHEBI:356416"/>
        <dbReference type="EC" id="5.4.3.8"/>
    </reaction>
</comment>
<comment type="cofactor">
    <cofactor evidence="1">
        <name>pyridoxal 5'-phosphate</name>
        <dbReference type="ChEBI" id="CHEBI:597326"/>
    </cofactor>
</comment>
<comment type="pathway">
    <text evidence="1">Porphyrin-containing compound metabolism; protoporphyrin-IX biosynthesis; 5-aminolevulinate from L-glutamyl-tRNA(Glu): step 2/2.</text>
</comment>
<comment type="pathway">
    <text evidence="1">Porphyrin-containing compound metabolism; chlorophyll biosynthesis.</text>
</comment>
<comment type="subunit">
    <text evidence="1">Homodimer.</text>
</comment>
<comment type="subcellular location">
    <subcellularLocation>
        <location evidence="1">Cytoplasm</location>
    </subcellularLocation>
</comment>
<comment type="similarity">
    <text evidence="1">Belongs to the class-III pyridoxal-phosphate-dependent aminotransferase family. HemL subfamily.</text>
</comment>
<dbReference type="EC" id="5.4.3.8" evidence="1"/>
<dbReference type="EMBL" id="CP000393">
    <property type="protein sequence ID" value="ABG51925.1"/>
    <property type="molecule type" value="Genomic_DNA"/>
</dbReference>
<dbReference type="RefSeq" id="WP_011612286.1">
    <property type="nucleotide sequence ID" value="NC_008312.1"/>
</dbReference>
<dbReference type="SMR" id="Q110Z9"/>
<dbReference type="STRING" id="203124.Tery_2741"/>
<dbReference type="KEGG" id="ter:Tery_2741"/>
<dbReference type="eggNOG" id="COG0001">
    <property type="taxonomic scope" value="Bacteria"/>
</dbReference>
<dbReference type="HOGENOM" id="CLU_016922_1_5_3"/>
<dbReference type="OrthoDB" id="9807885at2"/>
<dbReference type="UniPathway" id="UPA00251">
    <property type="reaction ID" value="UER00317"/>
</dbReference>
<dbReference type="UniPathway" id="UPA00668"/>
<dbReference type="GO" id="GO:0005737">
    <property type="term" value="C:cytoplasm"/>
    <property type="evidence" value="ECO:0007669"/>
    <property type="project" value="UniProtKB-SubCell"/>
</dbReference>
<dbReference type="GO" id="GO:0042286">
    <property type="term" value="F:glutamate-1-semialdehyde 2,1-aminomutase activity"/>
    <property type="evidence" value="ECO:0007669"/>
    <property type="project" value="UniProtKB-UniRule"/>
</dbReference>
<dbReference type="GO" id="GO:0030170">
    <property type="term" value="F:pyridoxal phosphate binding"/>
    <property type="evidence" value="ECO:0007669"/>
    <property type="project" value="InterPro"/>
</dbReference>
<dbReference type="GO" id="GO:0008483">
    <property type="term" value="F:transaminase activity"/>
    <property type="evidence" value="ECO:0007669"/>
    <property type="project" value="InterPro"/>
</dbReference>
<dbReference type="GO" id="GO:0015995">
    <property type="term" value="P:chlorophyll biosynthetic process"/>
    <property type="evidence" value="ECO:0007669"/>
    <property type="project" value="UniProtKB-UniPathway"/>
</dbReference>
<dbReference type="GO" id="GO:0006782">
    <property type="term" value="P:protoporphyrinogen IX biosynthetic process"/>
    <property type="evidence" value="ECO:0007669"/>
    <property type="project" value="UniProtKB-UniRule"/>
</dbReference>
<dbReference type="CDD" id="cd00610">
    <property type="entry name" value="OAT_like"/>
    <property type="match status" value="1"/>
</dbReference>
<dbReference type="FunFam" id="3.40.640.10:FF:000021">
    <property type="entry name" value="Glutamate-1-semialdehyde 2,1-aminomutase"/>
    <property type="match status" value="1"/>
</dbReference>
<dbReference type="FunFam" id="3.90.1150.10:FF:000012">
    <property type="entry name" value="Glutamate-1-semialdehyde 2,1-aminomutase"/>
    <property type="match status" value="1"/>
</dbReference>
<dbReference type="Gene3D" id="3.90.1150.10">
    <property type="entry name" value="Aspartate Aminotransferase, domain 1"/>
    <property type="match status" value="1"/>
</dbReference>
<dbReference type="Gene3D" id="3.40.640.10">
    <property type="entry name" value="Type I PLP-dependent aspartate aminotransferase-like (Major domain)"/>
    <property type="match status" value="1"/>
</dbReference>
<dbReference type="HAMAP" id="MF_00375">
    <property type="entry name" value="HemL_aminotrans_3"/>
    <property type="match status" value="1"/>
</dbReference>
<dbReference type="InterPro" id="IPR004639">
    <property type="entry name" value="4pyrrol_synth_GluAld_NH2Trfase"/>
</dbReference>
<dbReference type="InterPro" id="IPR005814">
    <property type="entry name" value="Aminotrans_3"/>
</dbReference>
<dbReference type="InterPro" id="IPR049704">
    <property type="entry name" value="Aminotrans_3_PPA_site"/>
</dbReference>
<dbReference type="InterPro" id="IPR015424">
    <property type="entry name" value="PyrdxlP-dep_Trfase"/>
</dbReference>
<dbReference type="InterPro" id="IPR015421">
    <property type="entry name" value="PyrdxlP-dep_Trfase_major"/>
</dbReference>
<dbReference type="InterPro" id="IPR015422">
    <property type="entry name" value="PyrdxlP-dep_Trfase_small"/>
</dbReference>
<dbReference type="NCBIfam" id="TIGR00713">
    <property type="entry name" value="hemL"/>
    <property type="match status" value="1"/>
</dbReference>
<dbReference type="NCBIfam" id="NF000818">
    <property type="entry name" value="PRK00062.1"/>
    <property type="match status" value="1"/>
</dbReference>
<dbReference type="PANTHER" id="PTHR43713">
    <property type="entry name" value="GLUTAMATE-1-SEMIALDEHYDE 2,1-AMINOMUTASE"/>
    <property type="match status" value="1"/>
</dbReference>
<dbReference type="PANTHER" id="PTHR43713:SF3">
    <property type="entry name" value="GLUTAMATE-1-SEMIALDEHYDE 2,1-AMINOMUTASE 1, CHLOROPLASTIC-RELATED"/>
    <property type="match status" value="1"/>
</dbReference>
<dbReference type="Pfam" id="PF00202">
    <property type="entry name" value="Aminotran_3"/>
    <property type="match status" value="1"/>
</dbReference>
<dbReference type="SUPFAM" id="SSF53383">
    <property type="entry name" value="PLP-dependent transferases"/>
    <property type="match status" value="1"/>
</dbReference>
<dbReference type="PROSITE" id="PS00600">
    <property type="entry name" value="AA_TRANSFER_CLASS_3"/>
    <property type="match status" value="1"/>
</dbReference>
<protein>
    <recommendedName>
        <fullName evidence="1">Glutamate-1-semialdehyde 2,1-aminomutase</fullName>
        <shortName evidence="1">GSA</shortName>
        <ecNumber evidence="1">5.4.3.8</ecNumber>
    </recommendedName>
    <alternativeName>
        <fullName evidence="1">Glutamate-1-semialdehyde aminotransferase</fullName>
        <shortName evidence="1">GSA-AT</shortName>
    </alternativeName>
</protein>
<evidence type="ECO:0000255" key="1">
    <source>
        <dbReference type="HAMAP-Rule" id="MF_00375"/>
    </source>
</evidence>
<feature type="chain" id="PRO_0000300956" description="Glutamate-1-semialdehyde 2,1-aminomutase">
    <location>
        <begin position="1"/>
        <end position="432"/>
    </location>
</feature>
<feature type="modified residue" description="N6-(pyridoxal phosphate)lysine" evidence="1">
    <location>
        <position position="272"/>
    </location>
</feature>
<gene>
    <name evidence="1" type="primary">hemL</name>
    <name type="ordered locus">Tery_2741</name>
</gene>